<feature type="signal peptide" evidence="2">
    <location>
        <begin position="1"/>
        <end position="16"/>
    </location>
</feature>
<feature type="propeptide" id="PRO_0000380770" evidence="1">
    <location>
        <begin position="17"/>
        <end position="122"/>
    </location>
</feature>
<feature type="chain" id="PRO_0000380771" description="Subtilisin-like protease 2">
    <location>
        <begin position="123"/>
        <end position="421"/>
    </location>
</feature>
<feature type="domain" description="Inhibitor I9" evidence="2">
    <location>
        <begin position="36"/>
        <end position="121"/>
    </location>
</feature>
<feature type="domain" description="Peptidase S8" evidence="3">
    <location>
        <begin position="131"/>
        <end position="421"/>
    </location>
</feature>
<feature type="active site" description="Charge relay system" evidence="3">
    <location>
        <position position="169"/>
    </location>
</feature>
<feature type="active site" description="Charge relay system" evidence="3">
    <location>
        <position position="201"/>
    </location>
</feature>
<feature type="active site" description="Charge relay system" evidence="3">
    <location>
        <position position="357"/>
    </location>
</feature>
<feature type="glycosylation site" description="N-linked (GlcNAc...) asparagine" evidence="2">
    <location>
        <position position="192"/>
    </location>
</feature>
<feature type="glycosylation site" description="N-linked (GlcNAc...) asparagine" evidence="2">
    <location>
        <position position="248"/>
    </location>
</feature>
<feature type="glycosylation site" description="N-linked (GlcNAc...) asparagine" evidence="2">
    <location>
        <position position="261"/>
    </location>
</feature>
<feature type="glycosylation site" description="N-linked (GlcNAc...) asparagine" evidence="2">
    <location>
        <position position="348"/>
    </location>
</feature>
<feature type="glycosylation site" description="N-linked (GlcNAc...) asparagine" evidence="2">
    <location>
        <position position="388"/>
    </location>
</feature>
<gene>
    <name type="primary">SUB2</name>
</gene>
<dbReference type="EC" id="3.4.21.-"/>
<dbReference type="EMBL" id="AY343500">
    <property type="protein sequence ID" value="AAR11461.1"/>
    <property type="status" value="ALT_SEQ"/>
    <property type="molecule type" value="Genomic_DNA"/>
</dbReference>
<dbReference type="SMR" id="Q69F57"/>
<dbReference type="MEROPS" id="S08.115"/>
<dbReference type="GlyCosmos" id="Q69F57">
    <property type="glycosylation" value="5 sites, No reported glycans"/>
</dbReference>
<dbReference type="VEuPathDB" id="FungiDB:TERG_08260"/>
<dbReference type="GO" id="GO:0005576">
    <property type="term" value="C:extracellular region"/>
    <property type="evidence" value="ECO:0007669"/>
    <property type="project" value="UniProtKB-SubCell"/>
</dbReference>
<dbReference type="GO" id="GO:0004252">
    <property type="term" value="F:serine-type endopeptidase activity"/>
    <property type="evidence" value="ECO:0007669"/>
    <property type="project" value="InterPro"/>
</dbReference>
<dbReference type="GO" id="GO:0006508">
    <property type="term" value="P:proteolysis"/>
    <property type="evidence" value="ECO:0007669"/>
    <property type="project" value="UniProtKB-KW"/>
</dbReference>
<dbReference type="CDD" id="cd04077">
    <property type="entry name" value="Peptidases_S8_PCSK9_ProteinaseK_like"/>
    <property type="match status" value="1"/>
</dbReference>
<dbReference type="FunFam" id="3.40.50.200:FF:000007">
    <property type="entry name" value="Subtilisin-like serine protease"/>
    <property type="match status" value="1"/>
</dbReference>
<dbReference type="Gene3D" id="3.30.70.80">
    <property type="entry name" value="Peptidase S8 propeptide/proteinase inhibitor I9"/>
    <property type="match status" value="1"/>
</dbReference>
<dbReference type="Gene3D" id="3.40.50.200">
    <property type="entry name" value="Peptidase S8/S53 domain"/>
    <property type="match status" value="1"/>
</dbReference>
<dbReference type="InterPro" id="IPR034193">
    <property type="entry name" value="PCSK9_ProteinaseK-like"/>
</dbReference>
<dbReference type="InterPro" id="IPR000209">
    <property type="entry name" value="Peptidase_S8/S53_dom"/>
</dbReference>
<dbReference type="InterPro" id="IPR036852">
    <property type="entry name" value="Peptidase_S8/S53_dom_sf"/>
</dbReference>
<dbReference type="InterPro" id="IPR023827">
    <property type="entry name" value="Peptidase_S8_Asp-AS"/>
</dbReference>
<dbReference type="InterPro" id="IPR022398">
    <property type="entry name" value="Peptidase_S8_His-AS"/>
</dbReference>
<dbReference type="InterPro" id="IPR023828">
    <property type="entry name" value="Peptidase_S8_Ser-AS"/>
</dbReference>
<dbReference type="InterPro" id="IPR050131">
    <property type="entry name" value="Peptidase_S8_subtilisin-like"/>
</dbReference>
<dbReference type="InterPro" id="IPR015500">
    <property type="entry name" value="Peptidase_S8_subtilisin-rel"/>
</dbReference>
<dbReference type="InterPro" id="IPR010259">
    <property type="entry name" value="S8pro/Inhibitor_I9"/>
</dbReference>
<dbReference type="InterPro" id="IPR037045">
    <property type="entry name" value="S8pro/Inhibitor_I9_sf"/>
</dbReference>
<dbReference type="PANTHER" id="PTHR43806:SF58">
    <property type="entry name" value="ALKALINE PROTEASE 1-RELATED"/>
    <property type="match status" value="1"/>
</dbReference>
<dbReference type="PANTHER" id="PTHR43806">
    <property type="entry name" value="PEPTIDASE S8"/>
    <property type="match status" value="1"/>
</dbReference>
<dbReference type="Pfam" id="PF05922">
    <property type="entry name" value="Inhibitor_I9"/>
    <property type="match status" value="1"/>
</dbReference>
<dbReference type="Pfam" id="PF00082">
    <property type="entry name" value="Peptidase_S8"/>
    <property type="match status" value="1"/>
</dbReference>
<dbReference type="PRINTS" id="PR00723">
    <property type="entry name" value="SUBTILISIN"/>
</dbReference>
<dbReference type="SUPFAM" id="SSF52743">
    <property type="entry name" value="Subtilisin-like"/>
    <property type="match status" value="1"/>
</dbReference>
<dbReference type="PROSITE" id="PS51892">
    <property type="entry name" value="SUBTILASE"/>
    <property type="match status" value="1"/>
</dbReference>
<dbReference type="PROSITE" id="PS00136">
    <property type="entry name" value="SUBTILASE_ASP"/>
    <property type="match status" value="1"/>
</dbReference>
<dbReference type="PROSITE" id="PS00137">
    <property type="entry name" value="SUBTILASE_HIS"/>
    <property type="match status" value="1"/>
</dbReference>
<dbReference type="PROSITE" id="PS00138">
    <property type="entry name" value="SUBTILASE_SER"/>
    <property type="match status" value="1"/>
</dbReference>
<keyword id="KW-0325">Glycoprotein</keyword>
<keyword id="KW-0378">Hydrolase</keyword>
<keyword id="KW-0645">Protease</keyword>
<keyword id="KW-0964">Secreted</keyword>
<keyword id="KW-0720">Serine protease</keyword>
<keyword id="KW-0732">Signal</keyword>
<keyword id="KW-0843">Virulence</keyword>
<keyword id="KW-0865">Zymogen</keyword>
<protein>
    <recommendedName>
        <fullName>Subtilisin-like protease 2</fullName>
        <ecNumber>3.4.21.-</ecNumber>
    </recommendedName>
</protein>
<reference key="1">
    <citation type="journal article" date="2004" name="Gene">
        <title>Secreted subtilisin gene family in Trichophyton rubrum.</title>
        <authorList>
            <person name="Jousson O."/>
            <person name="Lechenne B."/>
            <person name="Bontems O."/>
            <person name="Mignon B."/>
            <person name="Reichard U."/>
            <person name="Barblan J."/>
            <person name="Quadroni M."/>
            <person name="Monod M."/>
        </authorList>
    </citation>
    <scope>NUCLEOTIDE SEQUENCE [GENOMIC DNA]</scope>
</reference>
<proteinExistence type="inferred from homology"/>
<name>SUB2_TRIRU</name>
<comment type="function">
    <text evidence="1">Secreted subtilisin-like serine protease with keratinolytic activity that contributes to pathogenicity.</text>
</comment>
<comment type="subcellular location">
    <subcellularLocation>
        <location evidence="1">Secreted</location>
    </subcellularLocation>
</comment>
<comment type="similarity">
    <text evidence="4">Belongs to the peptidase S8 family.</text>
</comment>
<comment type="sequence caution" evidence="4">
    <conflict type="erroneous gene model prediction">
        <sequence resource="EMBL-CDS" id="AAR11461"/>
    </conflict>
</comment>
<evidence type="ECO:0000250" key="1"/>
<evidence type="ECO:0000255" key="2"/>
<evidence type="ECO:0000255" key="3">
    <source>
        <dbReference type="PROSITE-ProRule" id="PRU01240"/>
    </source>
</evidence>
<evidence type="ECO:0000305" key="4"/>
<sequence length="421" mass="45764">MQLLNFGLLLLPFVAGDLAPQPEPLLVGPSDIVPGQYLVTLKEGLTSAQIRDHKKWVSSVHRANLDSFAAGARGVETEGIMKHFHIHDLNMYSGGFDEKRVEDLSRSPYVKSVHPDQHFYLAKTVTQRQARWGLGYMSSKGKPVPLHSTLVDYSYDDKAGEGVWAYVLDTGINVNHVEFEGRAILGHNAIPNKSHTDEFGHGTCVAGIIAGKTYGVAKKANVVSAKAFDTGSSTYNYILETYDWIIRNITDSNRKNKAVINLSISGAKYQPFDDAAERAFKAGITTVVAAGNDGKDAKNNTPASSPNAITVGAVRWENTRPSFSNYGKIVDIWAPGELIKSCWKGGNNATSTQSGTSAASPHVAGLVAYLMSIKNLPSPSAVTARVLNLTIPNLVKDAKDSPNRVVYNGIQERKCKLPKYY</sequence>
<organism>
    <name type="scientific">Trichophyton rubrum</name>
    <name type="common">Athlete's foot fungus</name>
    <name type="synonym">Epidermophyton rubrum</name>
    <dbReference type="NCBI Taxonomy" id="5551"/>
    <lineage>
        <taxon>Eukaryota</taxon>
        <taxon>Fungi</taxon>
        <taxon>Dikarya</taxon>
        <taxon>Ascomycota</taxon>
        <taxon>Pezizomycotina</taxon>
        <taxon>Eurotiomycetes</taxon>
        <taxon>Eurotiomycetidae</taxon>
        <taxon>Onygenales</taxon>
        <taxon>Arthrodermataceae</taxon>
        <taxon>Trichophyton</taxon>
    </lineage>
</organism>
<accession>Q69F57</accession>